<sequence>MKKRYYTVKHGTLRALQEFADKHNVEVRREGGSKALRMYRPDGKWRTVVDFKTNSVPQGVRDRAFEEWEQIIIDNALLLNAD</sequence>
<reference key="1">
    <citation type="journal article" date="1990" name="J. Biol. Chem.">
        <title>A bacteriophage P1-encoded modulator protein affects the P1 c1 repression system.</title>
        <authorList>
            <person name="Velleman M."/>
            <person name="Heirich M."/>
            <person name="Guenther A."/>
            <person name="Schuster H."/>
        </authorList>
    </citation>
    <scope>NUCLEOTIDE SEQUENCE [GENOMIC DNA]</scope>
    <scope>PROTEIN SEQUENCE OF 1-11</scope>
</reference>
<reference key="2">
    <citation type="journal article" date="1990" name="J. Bacteriol.">
        <title>The bof gene of bacteriophage P1: DNA sequence and evidence for roles in regulation of phage c1 and ref genes.</title>
        <authorList>
            <person name="Schaefer T.S."/>
            <person name="Hays J.B."/>
        </authorList>
    </citation>
    <scope>NUCLEOTIDE SEQUENCE [GENOMIC DNA]</scope>
</reference>
<reference key="3">
    <citation type="journal article" date="2004" name="J. Bacteriol.">
        <title>Genome of bacteriophage P1.</title>
        <authorList>
            <person name="Lobocka M.B."/>
            <person name="Rose D.J."/>
            <person name="Plunkett G. III"/>
            <person name="Rusin M."/>
            <person name="Samojedny A."/>
            <person name="Lehnherr H."/>
            <person name="Yarmolinsky M.B."/>
            <person name="Blattner F.R."/>
        </authorList>
    </citation>
    <scope>NUCLEOTIDE SEQUENCE [LARGE SCALE GENOMIC DNA]</scope>
</reference>
<organismHost>
    <name type="scientific">Enterobacteriaceae</name>
    <dbReference type="NCBI Taxonomy" id="543"/>
</organismHost>
<gene>
    <name type="primary">bof</name>
    <name type="synonym">lxc</name>
</gene>
<feature type="chain" id="PRO_0000165272" description="Modulator protein">
    <location>
        <begin position="1"/>
        <end position="82"/>
    </location>
</feature>
<protein>
    <recommendedName>
        <fullName>Modulator protein</fullName>
    </recommendedName>
</protein>
<proteinExistence type="evidence at protein level"/>
<comment type="function">
    <text>Modulator protein affects the P1 c1 repression system.</text>
</comment>
<accession>P22499</accession>
<dbReference type="EMBL" id="J05651">
    <property type="protein sequence ID" value="AAA32416.1"/>
    <property type="molecule type" value="Genomic_DNA"/>
</dbReference>
<dbReference type="EMBL" id="M33224">
    <property type="protein sequence ID" value="AAA32415.1"/>
    <property type="molecule type" value="Genomic_DNA"/>
</dbReference>
<dbReference type="EMBL" id="AF234172">
    <property type="protein sequence ID" value="AAQ13983.1"/>
    <property type="molecule type" value="Genomic_DNA"/>
</dbReference>
<dbReference type="RefSeq" id="YP_006477.1">
    <property type="nucleotide sequence ID" value="NC_005856.1"/>
</dbReference>
<dbReference type="GeneID" id="2777417"/>
<dbReference type="KEGG" id="vg:2777417"/>
<dbReference type="Proteomes" id="UP000008091">
    <property type="component" value="Genome"/>
</dbReference>
<keyword id="KW-0010">Activator</keyword>
<keyword id="KW-0903">Direct protein sequencing</keyword>
<keyword id="KW-1185">Reference proteome</keyword>
<keyword id="KW-0678">Repressor</keyword>
<keyword id="KW-0804">Transcription</keyword>
<keyword id="KW-0805">Transcription regulation</keyword>
<name>BOF_BPP1</name>
<organism>
    <name type="scientific">Escherichia phage P1</name>
    <name type="common">Bacteriophage P1</name>
    <dbReference type="NCBI Taxonomy" id="2886926"/>
    <lineage>
        <taxon>Viruses</taxon>
        <taxon>Duplodnaviria</taxon>
        <taxon>Heunggongvirae</taxon>
        <taxon>Uroviricota</taxon>
        <taxon>Caudoviricetes</taxon>
        <taxon>Punavirus</taxon>
        <taxon>Punavirus P1</taxon>
    </lineage>
</organism>